<sequence>MSHSDQTSPLEARKSAALSGTARVPGDKSISHRALILGALAVGETRISGLLEGQDVIDTGKAMRALGARVERTGEFAWTVRGVGVAGFAQPEAPLDFGNSGTGCRLAMGAVAGSPITATFDGDASLRSRPMRRIVDPLEQMGARVIQSHEGGRLPLTLQGARDPLPITYRTPVPSAQIKSAVLLAGLSAPGVTTVIEAEASRDHTELMLQHFGATLVTEPEGAHGRKISLTGQPELRGARVVVPADPSSAAFPMVAALLVPGSDIVLTEVMTNPLRTGLITTLREMGGAIEESETRDDTGEPMAQFRIRGSRLRGVEVPPERAPSMIDEYLVLAVAAAFAEGTTVMRGLHELRVKESDRLEATADMLRVNGVKVEIVGDDLIVEGKGHVPGGGLVATHMDHRIAMSALVMGLAADRPVKVDDTAFIATSFPDFVPMMRRLGGELA</sequence>
<reference key="1">
    <citation type="submission" date="2006-03" db="EMBL/GenBank/DDBJ databases">
        <title>Complete sequence of Rhodopseudomonas palustris BisB5.</title>
        <authorList>
            <consortium name="US DOE Joint Genome Institute"/>
            <person name="Copeland A."/>
            <person name="Lucas S."/>
            <person name="Lapidus A."/>
            <person name="Barry K."/>
            <person name="Detter J.C."/>
            <person name="Glavina del Rio T."/>
            <person name="Hammon N."/>
            <person name="Israni S."/>
            <person name="Dalin E."/>
            <person name="Tice H."/>
            <person name="Pitluck S."/>
            <person name="Chain P."/>
            <person name="Malfatti S."/>
            <person name="Shin M."/>
            <person name="Vergez L."/>
            <person name="Schmutz J."/>
            <person name="Larimer F."/>
            <person name="Land M."/>
            <person name="Hauser L."/>
            <person name="Pelletier D.A."/>
            <person name="Kyrpides N."/>
            <person name="Lykidis A."/>
            <person name="Oda Y."/>
            <person name="Harwood C.S."/>
            <person name="Richardson P."/>
        </authorList>
    </citation>
    <scope>NUCLEOTIDE SEQUENCE [LARGE SCALE GENOMIC DNA]</scope>
    <source>
        <strain>BisB5</strain>
    </source>
</reference>
<accession>Q13ER0</accession>
<name>AROA_RHOPS</name>
<dbReference type="EC" id="2.5.1.19" evidence="1"/>
<dbReference type="EMBL" id="CP000283">
    <property type="protein sequence ID" value="ABE37429.1"/>
    <property type="molecule type" value="Genomic_DNA"/>
</dbReference>
<dbReference type="SMR" id="Q13ER0"/>
<dbReference type="STRING" id="316057.RPD_0189"/>
<dbReference type="KEGG" id="rpd:RPD_0189"/>
<dbReference type="eggNOG" id="COG0128">
    <property type="taxonomic scope" value="Bacteria"/>
</dbReference>
<dbReference type="HOGENOM" id="CLU_024321_0_1_5"/>
<dbReference type="BioCyc" id="RPAL316057:RPD_RS00960-MONOMER"/>
<dbReference type="UniPathway" id="UPA00053">
    <property type="reaction ID" value="UER00089"/>
</dbReference>
<dbReference type="Proteomes" id="UP000001818">
    <property type="component" value="Chromosome"/>
</dbReference>
<dbReference type="GO" id="GO:0005737">
    <property type="term" value="C:cytoplasm"/>
    <property type="evidence" value="ECO:0007669"/>
    <property type="project" value="UniProtKB-SubCell"/>
</dbReference>
<dbReference type="GO" id="GO:0003866">
    <property type="term" value="F:3-phosphoshikimate 1-carboxyvinyltransferase activity"/>
    <property type="evidence" value="ECO:0007669"/>
    <property type="project" value="UniProtKB-UniRule"/>
</dbReference>
<dbReference type="GO" id="GO:0008652">
    <property type="term" value="P:amino acid biosynthetic process"/>
    <property type="evidence" value="ECO:0007669"/>
    <property type="project" value="UniProtKB-KW"/>
</dbReference>
<dbReference type="GO" id="GO:0009073">
    <property type="term" value="P:aromatic amino acid family biosynthetic process"/>
    <property type="evidence" value="ECO:0007669"/>
    <property type="project" value="UniProtKB-KW"/>
</dbReference>
<dbReference type="GO" id="GO:0009423">
    <property type="term" value="P:chorismate biosynthetic process"/>
    <property type="evidence" value="ECO:0007669"/>
    <property type="project" value="UniProtKB-UniRule"/>
</dbReference>
<dbReference type="CDD" id="cd01556">
    <property type="entry name" value="EPSP_synthase"/>
    <property type="match status" value="1"/>
</dbReference>
<dbReference type="FunFam" id="3.65.10.10:FF:000005">
    <property type="entry name" value="3-phosphoshikimate 1-carboxyvinyltransferase"/>
    <property type="match status" value="1"/>
</dbReference>
<dbReference type="FunFam" id="3.65.10.10:FF:000006">
    <property type="entry name" value="3-phosphoshikimate 1-carboxyvinyltransferase"/>
    <property type="match status" value="1"/>
</dbReference>
<dbReference type="Gene3D" id="3.65.10.10">
    <property type="entry name" value="Enolpyruvate transferase domain"/>
    <property type="match status" value="2"/>
</dbReference>
<dbReference type="HAMAP" id="MF_00210">
    <property type="entry name" value="EPSP_synth"/>
    <property type="match status" value="1"/>
</dbReference>
<dbReference type="InterPro" id="IPR001986">
    <property type="entry name" value="Enolpyruvate_Tfrase_dom"/>
</dbReference>
<dbReference type="InterPro" id="IPR036968">
    <property type="entry name" value="Enolpyruvate_Tfrase_sf"/>
</dbReference>
<dbReference type="InterPro" id="IPR006264">
    <property type="entry name" value="EPSP_synthase"/>
</dbReference>
<dbReference type="InterPro" id="IPR023193">
    <property type="entry name" value="EPSP_synthase_CS"/>
</dbReference>
<dbReference type="InterPro" id="IPR013792">
    <property type="entry name" value="RNA3'P_cycl/enolpyr_Trfase_a/b"/>
</dbReference>
<dbReference type="NCBIfam" id="TIGR01356">
    <property type="entry name" value="aroA"/>
    <property type="match status" value="1"/>
</dbReference>
<dbReference type="PANTHER" id="PTHR21090">
    <property type="entry name" value="AROM/DEHYDROQUINATE SYNTHASE"/>
    <property type="match status" value="1"/>
</dbReference>
<dbReference type="PANTHER" id="PTHR21090:SF5">
    <property type="entry name" value="PENTAFUNCTIONAL AROM POLYPEPTIDE"/>
    <property type="match status" value="1"/>
</dbReference>
<dbReference type="Pfam" id="PF00275">
    <property type="entry name" value="EPSP_synthase"/>
    <property type="match status" value="1"/>
</dbReference>
<dbReference type="PIRSF" id="PIRSF000505">
    <property type="entry name" value="EPSPS"/>
    <property type="match status" value="1"/>
</dbReference>
<dbReference type="SUPFAM" id="SSF55205">
    <property type="entry name" value="EPT/RTPC-like"/>
    <property type="match status" value="1"/>
</dbReference>
<dbReference type="PROSITE" id="PS00104">
    <property type="entry name" value="EPSP_SYNTHASE_1"/>
    <property type="match status" value="1"/>
</dbReference>
<dbReference type="PROSITE" id="PS00885">
    <property type="entry name" value="EPSP_SYNTHASE_2"/>
    <property type="match status" value="1"/>
</dbReference>
<comment type="function">
    <text evidence="1">Catalyzes the transfer of the enolpyruvyl moiety of phosphoenolpyruvate (PEP) to the 5-hydroxyl of shikimate-3-phosphate (S3P) to produce enolpyruvyl shikimate-3-phosphate and inorganic phosphate.</text>
</comment>
<comment type="catalytic activity">
    <reaction evidence="1">
        <text>3-phosphoshikimate + phosphoenolpyruvate = 5-O-(1-carboxyvinyl)-3-phosphoshikimate + phosphate</text>
        <dbReference type="Rhea" id="RHEA:21256"/>
        <dbReference type="ChEBI" id="CHEBI:43474"/>
        <dbReference type="ChEBI" id="CHEBI:57701"/>
        <dbReference type="ChEBI" id="CHEBI:58702"/>
        <dbReference type="ChEBI" id="CHEBI:145989"/>
        <dbReference type="EC" id="2.5.1.19"/>
    </reaction>
    <physiologicalReaction direction="left-to-right" evidence="1">
        <dbReference type="Rhea" id="RHEA:21257"/>
    </physiologicalReaction>
</comment>
<comment type="pathway">
    <text evidence="1">Metabolic intermediate biosynthesis; chorismate biosynthesis; chorismate from D-erythrose 4-phosphate and phosphoenolpyruvate: step 6/7.</text>
</comment>
<comment type="subunit">
    <text evidence="1">Monomer.</text>
</comment>
<comment type="subcellular location">
    <subcellularLocation>
        <location evidence="1">Cytoplasm</location>
    </subcellularLocation>
</comment>
<comment type="similarity">
    <text evidence="1">Belongs to the EPSP synthase family.</text>
</comment>
<evidence type="ECO:0000255" key="1">
    <source>
        <dbReference type="HAMAP-Rule" id="MF_00210"/>
    </source>
</evidence>
<evidence type="ECO:0000256" key="2">
    <source>
        <dbReference type="SAM" id="MobiDB-lite"/>
    </source>
</evidence>
<organism>
    <name type="scientific">Rhodopseudomonas palustris (strain BisB5)</name>
    <dbReference type="NCBI Taxonomy" id="316057"/>
    <lineage>
        <taxon>Bacteria</taxon>
        <taxon>Pseudomonadati</taxon>
        <taxon>Pseudomonadota</taxon>
        <taxon>Alphaproteobacteria</taxon>
        <taxon>Hyphomicrobiales</taxon>
        <taxon>Nitrobacteraceae</taxon>
        <taxon>Rhodopseudomonas</taxon>
    </lineage>
</organism>
<protein>
    <recommendedName>
        <fullName evidence="1">3-phosphoshikimate 1-carboxyvinyltransferase</fullName>
        <ecNumber evidence="1">2.5.1.19</ecNumber>
    </recommendedName>
    <alternativeName>
        <fullName evidence="1">5-enolpyruvylshikimate-3-phosphate synthase</fullName>
        <shortName evidence="1">EPSP synthase</shortName>
        <shortName evidence="1">EPSPS</shortName>
    </alternativeName>
</protein>
<keyword id="KW-0028">Amino-acid biosynthesis</keyword>
<keyword id="KW-0057">Aromatic amino acid biosynthesis</keyword>
<keyword id="KW-0963">Cytoplasm</keyword>
<keyword id="KW-0808">Transferase</keyword>
<gene>
    <name evidence="1" type="primary">aroA</name>
    <name type="ordered locus">RPD_0189</name>
</gene>
<feature type="chain" id="PRO_1000058610" description="3-phosphoshikimate 1-carboxyvinyltransferase">
    <location>
        <begin position="1"/>
        <end position="445"/>
    </location>
</feature>
<feature type="region of interest" description="Disordered" evidence="2">
    <location>
        <begin position="1"/>
        <end position="25"/>
    </location>
</feature>
<feature type="active site" description="Proton acceptor" evidence="1">
    <location>
        <position position="328"/>
    </location>
</feature>
<feature type="binding site" evidence="1">
    <location>
        <position position="28"/>
    </location>
    <ligand>
        <name>3-phosphoshikimate</name>
        <dbReference type="ChEBI" id="CHEBI:145989"/>
    </ligand>
</feature>
<feature type="binding site" evidence="1">
    <location>
        <position position="28"/>
    </location>
    <ligand>
        <name>phosphoenolpyruvate</name>
        <dbReference type="ChEBI" id="CHEBI:58702"/>
    </ligand>
</feature>
<feature type="binding site" evidence="1">
    <location>
        <position position="29"/>
    </location>
    <ligand>
        <name>3-phosphoshikimate</name>
        <dbReference type="ChEBI" id="CHEBI:145989"/>
    </ligand>
</feature>
<feature type="binding site" evidence="1">
    <location>
        <position position="33"/>
    </location>
    <ligand>
        <name>3-phosphoshikimate</name>
        <dbReference type="ChEBI" id="CHEBI:145989"/>
    </ligand>
</feature>
<feature type="binding site" evidence="1">
    <location>
        <position position="101"/>
    </location>
    <ligand>
        <name>phosphoenolpyruvate</name>
        <dbReference type="ChEBI" id="CHEBI:58702"/>
    </ligand>
</feature>
<feature type="binding site" evidence="1">
    <location>
        <position position="129"/>
    </location>
    <ligand>
        <name>phosphoenolpyruvate</name>
        <dbReference type="ChEBI" id="CHEBI:58702"/>
    </ligand>
</feature>
<feature type="binding site" evidence="1">
    <location>
        <position position="175"/>
    </location>
    <ligand>
        <name>3-phosphoshikimate</name>
        <dbReference type="ChEBI" id="CHEBI:145989"/>
    </ligand>
</feature>
<feature type="binding site" evidence="1">
    <location>
        <position position="177"/>
    </location>
    <ligand>
        <name>3-phosphoshikimate</name>
        <dbReference type="ChEBI" id="CHEBI:145989"/>
    </ligand>
</feature>
<feature type="binding site" evidence="1">
    <location>
        <position position="177"/>
    </location>
    <ligand>
        <name>phosphoenolpyruvate</name>
        <dbReference type="ChEBI" id="CHEBI:58702"/>
    </ligand>
</feature>
<feature type="binding site" evidence="1">
    <location>
        <position position="328"/>
    </location>
    <ligand>
        <name>3-phosphoshikimate</name>
        <dbReference type="ChEBI" id="CHEBI:145989"/>
    </ligand>
</feature>
<feature type="binding site" evidence="1">
    <location>
        <position position="355"/>
    </location>
    <ligand>
        <name>3-phosphoshikimate</name>
        <dbReference type="ChEBI" id="CHEBI:145989"/>
    </ligand>
</feature>
<feature type="binding site" evidence="1">
    <location>
        <position position="359"/>
    </location>
    <ligand>
        <name>phosphoenolpyruvate</name>
        <dbReference type="ChEBI" id="CHEBI:58702"/>
    </ligand>
</feature>
<feature type="binding site" evidence="1">
    <location>
        <position position="402"/>
    </location>
    <ligand>
        <name>phosphoenolpyruvate</name>
        <dbReference type="ChEBI" id="CHEBI:58702"/>
    </ligand>
</feature>
<proteinExistence type="inferred from homology"/>